<accession>Q54VN2</accession>
<proteinExistence type="inferred from homology"/>
<protein>
    <recommendedName>
        <fullName evidence="1">2-methoxy-6-polyprenyl-1,4-benzoquinol methylase, mitochondrial</fullName>
        <ecNumber evidence="1">2.1.1.201</ecNumber>
    </recommendedName>
    <alternativeName>
        <fullName evidence="1">Ubiquinone biosynthesis methyltransferase COQ5</fullName>
    </alternativeName>
</protein>
<reference key="1">
    <citation type="journal article" date="2005" name="Nature">
        <title>The genome of the social amoeba Dictyostelium discoideum.</title>
        <authorList>
            <person name="Eichinger L."/>
            <person name="Pachebat J.A."/>
            <person name="Gloeckner G."/>
            <person name="Rajandream M.A."/>
            <person name="Sucgang R."/>
            <person name="Berriman M."/>
            <person name="Song J."/>
            <person name="Olsen R."/>
            <person name="Szafranski K."/>
            <person name="Xu Q."/>
            <person name="Tunggal B."/>
            <person name="Kummerfeld S."/>
            <person name="Madera M."/>
            <person name="Konfortov B.A."/>
            <person name="Rivero F."/>
            <person name="Bankier A.T."/>
            <person name="Lehmann R."/>
            <person name="Hamlin N."/>
            <person name="Davies R."/>
            <person name="Gaudet P."/>
            <person name="Fey P."/>
            <person name="Pilcher K."/>
            <person name="Chen G."/>
            <person name="Saunders D."/>
            <person name="Sodergren E.J."/>
            <person name="Davis P."/>
            <person name="Kerhornou A."/>
            <person name="Nie X."/>
            <person name="Hall N."/>
            <person name="Anjard C."/>
            <person name="Hemphill L."/>
            <person name="Bason N."/>
            <person name="Farbrother P."/>
            <person name="Desany B."/>
            <person name="Just E."/>
            <person name="Morio T."/>
            <person name="Rost R."/>
            <person name="Churcher C.M."/>
            <person name="Cooper J."/>
            <person name="Haydock S."/>
            <person name="van Driessche N."/>
            <person name="Cronin A."/>
            <person name="Goodhead I."/>
            <person name="Muzny D.M."/>
            <person name="Mourier T."/>
            <person name="Pain A."/>
            <person name="Lu M."/>
            <person name="Harper D."/>
            <person name="Lindsay R."/>
            <person name="Hauser H."/>
            <person name="James K.D."/>
            <person name="Quiles M."/>
            <person name="Madan Babu M."/>
            <person name="Saito T."/>
            <person name="Buchrieser C."/>
            <person name="Wardroper A."/>
            <person name="Felder M."/>
            <person name="Thangavelu M."/>
            <person name="Johnson D."/>
            <person name="Knights A."/>
            <person name="Loulseged H."/>
            <person name="Mungall K.L."/>
            <person name="Oliver K."/>
            <person name="Price C."/>
            <person name="Quail M.A."/>
            <person name="Urushihara H."/>
            <person name="Hernandez J."/>
            <person name="Rabbinowitsch E."/>
            <person name="Steffen D."/>
            <person name="Sanders M."/>
            <person name="Ma J."/>
            <person name="Kohara Y."/>
            <person name="Sharp S."/>
            <person name="Simmonds M.N."/>
            <person name="Spiegler S."/>
            <person name="Tivey A."/>
            <person name="Sugano S."/>
            <person name="White B."/>
            <person name="Walker D."/>
            <person name="Woodward J.R."/>
            <person name="Winckler T."/>
            <person name="Tanaka Y."/>
            <person name="Shaulsky G."/>
            <person name="Schleicher M."/>
            <person name="Weinstock G.M."/>
            <person name="Rosenthal A."/>
            <person name="Cox E.C."/>
            <person name="Chisholm R.L."/>
            <person name="Gibbs R.A."/>
            <person name="Loomis W.F."/>
            <person name="Platzer M."/>
            <person name="Kay R.R."/>
            <person name="Williams J.G."/>
            <person name="Dear P.H."/>
            <person name="Noegel A.A."/>
            <person name="Barrell B.G."/>
            <person name="Kuspa A."/>
        </authorList>
    </citation>
    <scope>NUCLEOTIDE SEQUENCE [LARGE SCALE GENOMIC DNA]</scope>
    <source>
        <strain>AX4</strain>
    </source>
</reference>
<feature type="transit peptide" description="Mitochondrion" evidence="1">
    <location>
        <begin position="1"/>
        <end position="19"/>
    </location>
</feature>
<feature type="chain" id="PRO_0000328351" description="2-methoxy-6-polyprenyl-1,4-benzoquinol methylase, mitochondrial">
    <location>
        <begin position="20"/>
        <end position="314"/>
    </location>
</feature>
<feature type="binding site" evidence="1">
    <location>
        <position position="109"/>
    </location>
    <ligand>
        <name>S-adenosyl-L-methionine</name>
        <dbReference type="ChEBI" id="CHEBI:59789"/>
    </ligand>
</feature>
<feature type="binding site" evidence="1">
    <location>
        <position position="154"/>
    </location>
    <ligand>
        <name>S-adenosyl-L-methionine</name>
        <dbReference type="ChEBI" id="CHEBI:59789"/>
    </ligand>
</feature>
<feature type="binding site" evidence="1">
    <location>
        <begin position="186"/>
        <end position="187"/>
    </location>
    <ligand>
        <name>S-adenosyl-L-methionine</name>
        <dbReference type="ChEBI" id="CHEBI:59789"/>
    </ligand>
</feature>
<feature type="binding site" evidence="1">
    <location>
        <position position="203"/>
    </location>
    <ligand>
        <name>S-adenosyl-L-methionine</name>
        <dbReference type="ChEBI" id="CHEBI:59789"/>
    </ligand>
</feature>
<keyword id="KW-0472">Membrane</keyword>
<keyword id="KW-0489">Methyltransferase</keyword>
<keyword id="KW-0496">Mitochondrion</keyword>
<keyword id="KW-0999">Mitochondrion inner membrane</keyword>
<keyword id="KW-1185">Reference proteome</keyword>
<keyword id="KW-0949">S-adenosyl-L-methionine</keyword>
<keyword id="KW-0808">Transferase</keyword>
<keyword id="KW-0809">Transit peptide</keyword>
<keyword id="KW-0831">Ubiquinone biosynthesis</keyword>
<name>COQ5_DICDI</name>
<gene>
    <name evidence="1" type="primary">coq5</name>
    <name type="ORF">DDB_G0280237</name>
</gene>
<evidence type="ECO:0000255" key="1">
    <source>
        <dbReference type="HAMAP-Rule" id="MF_03191"/>
    </source>
</evidence>
<comment type="function">
    <text evidence="1">Methyltransferase required for the conversion of 2-polyprenyl-6-methoxy-1,4-benzoquinol (DDMQH2) to 2-polyprenyl-3-methyl-6-methoxy-1,4-benzoquinol (DMQH2).</text>
</comment>
<comment type="catalytic activity">
    <reaction evidence="1">
        <text>a 2-methoxy-6-(all-trans-polyprenyl)benzene-1,4-diol + S-adenosyl-L-methionine = a 5-methoxy-2-methyl-3-(all-trans-polyprenyl)benzene-1,4-diol + S-adenosyl-L-homocysteine + H(+)</text>
        <dbReference type="Rhea" id="RHEA:28286"/>
        <dbReference type="Rhea" id="RHEA-COMP:10858"/>
        <dbReference type="Rhea" id="RHEA-COMP:10859"/>
        <dbReference type="ChEBI" id="CHEBI:15378"/>
        <dbReference type="ChEBI" id="CHEBI:57856"/>
        <dbReference type="ChEBI" id="CHEBI:59789"/>
        <dbReference type="ChEBI" id="CHEBI:84166"/>
        <dbReference type="ChEBI" id="CHEBI:84167"/>
        <dbReference type="EC" id="2.1.1.201"/>
    </reaction>
</comment>
<comment type="pathway">
    <text evidence="1">Cofactor biosynthesis; ubiquinone biosynthesis.</text>
</comment>
<comment type="subunit">
    <text evidence="1">Component of a multi-subunit COQ enzyme complex.</text>
</comment>
<comment type="subcellular location">
    <subcellularLocation>
        <location evidence="1">Mitochondrion inner membrane</location>
        <topology evidence="1">Peripheral membrane protein</topology>
        <orientation evidence="1">Matrix side</orientation>
    </subcellularLocation>
</comment>
<comment type="similarity">
    <text evidence="1">Belongs to the class I-like SAM-binding methyltransferase superfamily. MenG/UbiE family.</text>
</comment>
<dbReference type="EC" id="2.1.1.201" evidence="1"/>
<dbReference type="EMBL" id="AAFI02000035">
    <property type="protein sequence ID" value="EAL67345.1"/>
    <property type="molecule type" value="Genomic_DNA"/>
</dbReference>
<dbReference type="RefSeq" id="XP_641323.1">
    <property type="nucleotide sequence ID" value="XM_636231.1"/>
</dbReference>
<dbReference type="SMR" id="Q54VN2"/>
<dbReference type="FunCoup" id="Q54VN2">
    <property type="interactions" value="648"/>
</dbReference>
<dbReference type="STRING" id="44689.Q54VN2"/>
<dbReference type="GlyGen" id="Q54VN2">
    <property type="glycosylation" value="1 site"/>
</dbReference>
<dbReference type="PaxDb" id="44689-DDB0231541"/>
<dbReference type="EnsemblProtists" id="EAL67345">
    <property type="protein sequence ID" value="EAL67345"/>
    <property type="gene ID" value="DDB_G0280237"/>
</dbReference>
<dbReference type="GeneID" id="8622456"/>
<dbReference type="KEGG" id="ddi:DDB_G0280237"/>
<dbReference type="dictyBase" id="DDB_G0280237">
    <property type="gene designation" value="coq5"/>
</dbReference>
<dbReference type="VEuPathDB" id="AmoebaDB:DDB_G0280237"/>
<dbReference type="eggNOG" id="KOG1540">
    <property type="taxonomic scope" value="Eukaryota"/>
</dbReference>
<dbReference type="HOGENOM" id="CLU_037990_0_1_1"/>
<dbReference type="InParanoid" id="Q54VN2"/>
<dbReference type="OMA" id="MNDVMSM"/>
<dbReference type="PhylomeDB" id="Q54VN2"/>
<dbReference type="Reactome" id="R-DDI-2142789">
    <property type="pathway name" value="Ubiquinol biosynthesis"/>
</dbReference>
<dbReference type="UniPathway" id="UPA00232"/>
<dbReference type="PRO" id="PR:Q54VN2"/>
<dbReference type="Proteomes" id="UP000002195">
    <property type="component" value="Chromosome 3"/>
</dbReference>
<dbReference type="GO" id="GO:0031314">
    <property type="term" value="C:extrinsic component of mitochondrial inner membrane"/>
    <property type="evidence" value="ECO:0007669"/>
    <property type="project" value="UniProtKB-UniRule"/>
</dbReference>
<dbReference type="GO" id="GO:0005739">
    <property type="term" value="C:mitochondrion"/>
    <property type="evidence" value="ECO:0000250"/>
    <property type="project" value="dictyBase"/>
</dbReference>
<dbReference type="GO" id="GO:0008425">
    <property type="term" value="F:2-methoxy-6-polyprenyl-1,4-benzoquinol methyltransferase activity"/>
    <property type="evidence" value="ECO:0000250"/>
    <property type="project" value="dictyBase"/>
</dbReference>
<dbReference type="GO" id="GO:0009060">
    <property type="term" value="P:aerobic respiration"/>
    <property type="evidence" value="ECO:0000250"/>
    <property type="project" value="dictyBase"/>
</dbReference>
<dbReference type="GO" id="GO:0032259">
    <property type="term" value="P:methylation"/>
    <property type="evidence" value="ECO:0007669"/>
    <property type="project" value="UniProtKB-KW"/>
</dbReference>
<dbReference type="GO" id="GO:0006744">
    <property type="term" value="P:ubiquinone biosynthetic process"/>
    <property type="evidence" value="ECO:0000318"/>
    <property type="project" value="GO_Central"/>
</dbReference>
<dbReference type="GO" id="GO:0006743">
    <property type="term" value="P:ubiquinone metabolic process"/>
    <property type="evidence" value="ECO:0000250"/>
    <property type="project" value="dictyBase"/>
</dbReference>
<dbReference type="CDD" id="cd02440">
    <property type="entry name" value="AdoMet_MTases"/>
    <property type="match status" value="1"/>
</dbReference>
<dbReference type="FunFam" id="3.40.50.150:FF:000208">
    <property type="entry name" value="2-methoxy-6-polyprenyl-1,4-benzoquinol methylase, mitochondrial"/>
    <property type="match status" value="1"/>
</dbReference>
<dbReference type="Gene3D" id="3.40.50.150">
    <property type="entry name" value="Vaccinia Virus protein VP39"/>
    <property type="match status" value="1"/>
</dbReference>
<dbReference type="HAMAP" id="MF_01813">
    <property type="entry name" value="MenG_UbiE_methyltr"/>
    <property type="match status" value="1"/>
</dbReference>
<dbReference type="InterPro" id="IPR029063">
    <property type="entry name" value="SAM-dependent_MTases_sf"/>
</dbReference>
<dbReference type="InterPro" id="IPR004033">
    <property type="entry name" value="UbiE/COQ5_MeTrFase"/>
</dbReference>
<dbReference type="InterPro" id="IPR023576">
    <property type="entry name" value="UbiE/COQ5_MeTrFase_CS"/>
</dbReference>
<dbReference type="NCBIfam" id="TIGR01934">
    <property type="entry name" value="MenG_MenH_UbiE"/>
    <property type="match status" value="1"/>
</dbReference>
<dbReference type="PANTHER" id="PTHR43591:SF24">
    <property type="entry name" value="2-METHOXY-6-POLYPRENYL-1,4-BENZOQUINOL METHYLASE, MITOCHONDRIAL"/>
    <property type="match status" value="1"/>
</dbReference>
<dbReference type="PANTHER" id="PTHR43591">
    <property type="entry name" value="METHYLTRANSFERASE"/>
    <property type="match status" value="1"/>
</dbReference>
<dbReference type="Pfam" id="PF01209">
    <property type="entry name" value="Ubie_methyltran"/>
    <property type="match status" value="1"/>
</dbReference>
<dbReference type="SUPFAM" id="SSF53335">
    <property type="entry name" value="S-adenosyl-L-methionine-dependent methyltransferases"/>
    <property type="match status" value="1"/>
</dbReference>
<dbReference type="PROSITE" id="PS51608">
    <property type="entry name" value="SAM_MT_UBIE"/>
    <property type="match status" value="1"/>
</dbReference>
<dbReference type="PROSITE" id="PS01183">
    <property type="entry name" value="UBIE_1"/>
    <property type="match status" value="1"/>
</dbReference>
<dbReference type="PROSITE" id="PS01184">
    <property type="entry name" value="UBIE_2"/>
    <property type="match status" value="1"/>
</dbReference>
<organism>
    <name type="scientific">Dictyostelium discoideum</name>
    <name type="common">Social amoeba</name>
    <dbReference type="NCBI Taxonomy" id="44689"/>
    <lineage>
        <taxon>Eukaryota</taxon>
        <taxon>Amoebozoa</taxon>
        <taxon>Evosea</taxon>
        <taxon>Eumycetozoa</taxon>
        <taxon>Dictyostelia</taxon>
        <taxon>Dictyosteliales</taxon>
        <taxon>Dictyosteliaceae</taxon>
        <taxon>Dictyostelium</taxon>
    </lineage>
</organism>
<sequence length="314" mass="35300">MLQSLNRSVRYLSTSIGSRLYCSNTNQTTKNNTNASGVNDNQQTHFGFKTVNKEDKESMVKDVFDSVSSSYDLMNDVMSMGIHRLWKDELINTLNPTPGSHLLDVAGGTGDISFRFLDKIKTSPNYFPNINKSNNGGGEVLKSSSLPSSATVFDINQSMLNEGKKRGLNKGYTDQSDPSIDWVQGNSEQLPFKDNTFNCYTVSFGIRNCTNIDQVLREAYRVLKPGGRFLCLEFSQVPNPLLRFAYDQYSFNVIPIMGQLISGDRDSYSYLVESIRKFPDQETFVQMIQDAGFKQVTYKNLTFGICSIHSGFKL</sequence>